<reference key="1">
    <citation type="journal article" date="2001" name="Science">
        <title>Mechanisms of evolution in Rickettsia conorii and R. prowazekii.</title>
        <authorList>
            <person name="Ogata H."/>
            <person name="Audic S."/>
            <person name="Renesto-Audiffren P."/>
            <person name="Fournier P.-E."/>
            <person name="Barbe V."/>
            <person name="Samson D."/>
            <person name="Roux V."/>
            <person name="Cossart P."/>
            <person name="Weissenbach J."/>
            <person name="Claverie J.-M."/>
            <person name="Raoult D."/>
        </authorList>
    </citation>
    <scope>NUCLEOTIDE SEQUENCE [LARGE SCALE GENOMIC DNA]</scope>
    <source>
        <strain>ATCC VR-613 / Malish 7</strain>
    </source>
</reference>
<proteinExistence type="inferred from homology"/>
<gene>
    <name evidence="1" type="primary">gltX2</name>
    <name type="ordered locus">RC0966</name>
</gene>
<keyword id="KW-0030">Aminoacyl-tRNA synthetase</keyword>
<keyword id="KW-0067">ATP-binding</keyword>
<keyword id="KW-0963">Cytoplasm</keyword>
<keyword id="KW-0436">Ligase</keyword>
<keyword id="KW-0547">Nucleotide-binding</keyword>
<keyword id="KW-0648">Protein biosynthesis</keyword>
<accession>Q92H06</accession>
<name>SYE2_RICCN</name>
<evidence type="ECO:0000255" key="1">
    <source>
        <dbReference type="HAMAP-Rule" id="MF_00022"/>
    </source>
</evidence>
<comment type="function">
    <text evidence="1">Catalyzes the attachment of glutamate to tRNA(Glu) in a two-step reaction: glutamate is first activated by ATP to form Glu-AMP and then transferred to the acceptor end of tRNA(Glu).</text>
</comment>
<comment type="catalytic activity">
    <reaction evidence="1">
        <text>tRNA(Glu) + L-glutamate + ATP = L-glutamyl-tRNA(Glu) + AMP + diphosphate</text>
        <dbReference type="Rhea" id="RHEA:23540"/>
        <dbReference type="Rhea" id="RHEA-COMP:9663"/>
        <dbReference type="Rhea" id="RHEA-COMP:9680"/>
        <dbReference type="ChEBI" id="CHEBI:29985"/>
        <dbReference type="ChEBI" id="CHEBI:30616"/>
        <dbReference type="ChEBI" id="CHEBI:33019"/>
        <dbReference type="ChEBI" id="CHEBI:78442"/>
        <dbReference type="ChEBI" id="CHEBI:78520"/>
        <dbReference type="ChEBI" id="CHEBI:456215"/>
        <dbReference type="EC" id="6.1.1.17"/>
    </reaction>
</comment>
<comment type="subunit">
    <text evidence="1">Monomer.</text>
</comment>
<comment type="subcellular location">
    <subcellularLocation>
        <location evidence="1">Cytoplasm</location>
    </subcellularLocation>
</comment>
<comment type="similarity">
    <text evidence="1">Belongs to the class-I aminoacyl-tRNA synthetase family. Glutamate--tRNA ligase type 1 subfamily.</text>
</comment>
<sequence length="513" mass="58453">MNNNVITRFAPSPTGFLHIGSARTALFNYLFARHHNGKFLLRIEDTDKERSTKEAVEAIFSGLKWLGLDWNGEVIFQSKRNNLYKEAALKLLQNGKAYYCFTRQEEIERQRQQALENKQHFIFNSEWRDKDPSIYPTDIKPVIRLKTPREGSITIHDTLQGEVVIENSHIDDMVLLRADGTATYMLAVVVDDHDMGITHIIRGDDHLTNTARQLAIYQAFGYAVPSMTHIPLIHGADGAKLSKRHGALGIEAYKDMGYLPESLCNYLLRLGWSHGDDEIISMTQAIDWFNLDSLGKSPSKLDFAKMNSLNAHYLRMLDNDSLTSKTVEILEQNYNTLLRHLPYREEFGGNTERSTAAYIDIREDASTGLTYKLPLAVELPKKFKISEQEIGYIKQAMPSLLVRSETLLELTRLAQIYLVDSPIIYSQDSKEIIENCDKNLIKQIIENLSELEQFDKESVQNKFKEIAAANDLKLNDIMKPVRALITGMTASPSIFEIAEILGKENILKRLKII</sequence>
<dbReference type="EC" id="6.1.1.17" evidence="1"/>
<dbReference type="EMBL" id="AE006914">
    <property type="protein sequence ID" value="AAL03504.1"/>
    <property type="molecule type" value="Genomic_DNA"/>
</dbReference>
<dbReference type="PIR" id="F97820">
    <property type="entry name" value="F97820"/>
</dbReference>
<dbReference type="RefSeq" id="WP_010977561.1">
    <property type="nucleotide sequence ID" value="NC_003103.1"/>
</dbReference>
<dbReference type="SMR" id="Q92H06"/>
<dbReference type="GeneID" id="927885"/>
<dbReference type="KEGG" id="rco:RC0966"/>
<dbReference type="PATRIC" id="fig|272944.4.peg.1099"/>
<dbReference type="HOGENOM" id="CLU_015768_6_0_5"/>
<dbReference type="Proteomes" id="UP000000816">
    <property type="component" value="Chromosome"/>
</dbReference>
<dbReference type="GO" id="GO:0005829">
    <property type="term" value="C:cytosol"/>
    <property type="evidence" value="ECO:0007669"/>
    <property type="project" value="TreeGrafter"/>
</dbReference>
<dbReference type="GO" id="GO:0005524">
    <property type="term" value="F:ATP binding"/>
    <property type="evidence" value="ECO:0007669"/>
    <property type="project" value="UniProtKB-UniRule"/>
</dbReference>
<dbReference type="GO" id="GO:0004818">
    <property type="term" value="F:glutamate-tRNA ligase activity"/>
    <property type="evidence" value="ECO:0007669"/>
    <property type="project" value="UniProtKB-UniRule"/>
</dbReference>
<dbReference type="GO" id="GO:0000049">
    <property type="term" value="F:tRNA binding"/>
    <property type="evidence" value="ECO:0007669"/>
    <property type="project" value="InterPro"/>
</dbReference>
<dbReference type="GO" id="GO:0008270">
    <property type="term" value="F:zinc ion binding"/>
    <property type="evidence" value="ECO:0007669"/>
    <property type="project" value="InterPro"/>
</dbReference>
<dbReference type="GO" id="GO:0006424">
    <property type="term" value="P:glutamyl-tRNA aminoacylation"/>
    <property type="evidence" value="ECO:0007669"/>
    <property type="project" value="UniProtKB-UniRule"/>
</dbReference>
<dbReference type="CDD" id="cd00808">
    <property type="entry name" value="GluRS_core"/>
    <property type="match status" value="1"/>
</dbReference>
<dbReference type="FunFam" id="3.40.50.620:FF:000007">
    <property type="entry name" value="Glutamate--tRNA ligase"/>
    <property type="match status" value="1"/>
</dbReference>
<dbReference type="Gene3D" id="1.10.10.350">
    <property type="match status" value="1"/>
</dbReference>
<dbReference type="Gene3D" id="3.40.50.620">
    <property type="entry name" value="HUPs"/>
    <property type="match status" value="1"/>
</dbReference>
<dbReference type="HAMAP" id="MF_00022">
    <property type="entry name" value="Glu_tRNA_synth_type1"/>
    <property type="match status" value="1"/>
</dbReference>
<dbReference type="InterPro" id="IPR045462">
    <property type="entry name" value="aa-tRNA-synth_I_cd-bd"/>
</dbReference>
<dbReference type="InterPro" id="IPR020751">
    <property type="entry name" value="aa-tRNA-synth_I_codon-bd_sub2"/>
</dbReference>
<dbReference type="InterPro" id="IPR008925">
    <property type="entry name" value="aa_tRNA-synth_I_cd-bd_sf"/>
</dbReference>
<dbReference type="InterPro" id="IPR004527">
    <property type="entry name" value="Glu-tRNA-ligase_bac/mito"/>
</dbReference>
<dbReference type="InterPro" id="IPR000924">
    <property type="entry name" value="Glu/Gln-tRNA-synth"/>
</dbReference>
<dbReference type="InterPro" id="IPR020058">
    <property type="entry name" value="Glu/Gln-tRNA-synth_Ib_cat-dom"/>
</dbReference>
<dbReference type="InterPro" id="IPR049940">
    <property type="entry name" value="GluQ/Sye"/>
</dbReference>
<dbReference type="InterPro" id="IPR033910">
    <property type="entry name" value="GluRS_core"/>
</dbReference>
<dbReference type="InterPro" id="IPR014729">
    <property type="entry name" value="Rossmann-like_a/b/a_fold"/>
</dbReference>
<dbReference type="InterPro" id="IPR005728">
    <property type="entry name" value="RPE1"/>
</dbReference>
<dbReference type="NCBIfam" id="TIGR00464">
    <property type="entry name" value="gltX_bact"/>
    <property type="match status" value="1"/>
</dbReference>
<dbReference type="NCBIfam" id="TIGR01045">
    <property type="entry name" value="RPE1"/>
    <property type="match status" value="1"/>
</dbReference>
<dbReference type="PANTHER" id="PTHR43311">
    <property type="entry name" value="GLUTAMATE--TRNA LIGASE"/>
    <property type="match status" value="1"/>
</dbReference>
<dbReference type="PANTHER" id="PTHR43311:SF2">
    <property type="entry name" value="GLUTAMATE--TRNA LIGASE, MITOCHONDRIAL-RELATED"/>
    <property type="match status" value="1"/>
</dbReference>
<dbReference type="Pfam" id="PF19269">
    <property type="entry name" value="Anticodon_2"/>
    <property type="match status" value="1"/>
</dbReference>
<dbReference type="Pfam" id="PF00749">
    <property type="entry name" value="tRNA-synt_1c"/>
    <property type="match status" value="1"/>
</dbReference>
<dbReference type="PRINTS" id="PR00987">
    <property type="entry name" value="TRNASYNTHGLU"/>
</dbReference>
<dbReference type="SUPFAM" id="SSF48163">
    <property type="entry name" value="An anticodon-binding domain of class I aminoacyl-tRNA synthetases"/>
    <property type="match status" value="1"/>
</dbReference>
<dbReference type="SUPFAM" id="SSF52374">
    <property type="entry name" value="Nucleotidylyl transferase"/>
    <property type="match status" value="1"/>
</dbReference>
<organism>
    <name type="scientific">Rickettsia conorii (strain ATCC VR-613 / Malish 7)</name>
    <dbReference type="NCBI Taxonomy" id="272944"/>
    <lineage>
        <taxon>Bacteria</taxon>
        <taxon>Pseudomonadati</taxon>
        <taxon>Pseudomonadota</taxon>
        <taxon>Alphaproteobacteria</taxon>
        <taxon>Rickettsiales</taxon>
        <taxon>Rickettsiaceae</taxon>
        <taxon>Rickettsieae</taxon>
        <taxon>Rickettsia</taxon>
        <taxon>spotted fever group</taxon>
    </lineage>
</organism>
<protein>
    <recommendedName>
        <fullName evidence="1">Glutamate--tRNA ligase 2</fullName>
        <ecNumber evidence="1">6.1.1.17</ecNumber>
    </recommendedName>
    <alternativeName>
        <fullName evidence="1">Glutamyl-tRNA synthetase 2</fullName>
        <shortName evidence="1">GluRS 2</shortName>
    </alternativeName>
</protein>
<feature type="chain" id="PRO_0000119639" description="Glutamate--tRNA ligase 2">
    <location>
        <begin position="1"/>
        <end position="513"/>
    </location>
</feature>
<feature type="domain" description="RPE1 insert">
    <location>
        <begin position="335"/>
        <end position="383"/>
    </location>
</feature>
<feature type="short sequence motif" description="'HIGH' region" evidence="1">
    <location>
        <begin position="11"/>
        <end position="21"/>
    </location>
</feature>
<feature type="short sequence motif" description="'KMSKS' region" evidence="1">
    <location>
        <begin position="240"/>
        <end position="244"/>
    </location>
</feature>
<feature type="binding site" evidence="1">
    <location>
        <position position="243"/>
    </location>
    <ligand>
        <name>ATP</name>
        <dbReference type="ChEBI" id="CHEBI:30616"/>
    </ligand>
</feature>